<proteinExistence type="inferred from homology"/>
<reference key="1">
    <citation type="journal article" date="2006" name="Proc. Natl. Acad. Sci. U.S.A.">
        <title>Burkholderia xenovorans LB400 harbors a multi-replicon, 9.73-Mbp genome shaped for versatility.</title>
        <authorList>
            <person name="Chain P.S.G."/>
            <person name="Denef V.J."/>
            <person name="Konstantinidis K.T."/>
            <person name="Vergez L.M."/>
            <person name="Agullo L."/>
            <person name="Reyes V.L."/>
            <person name="Hauser L."/>
            <person name="Cordova M."/>
            <person name="Gomez L."/>
            <person name="Gonzalez M."/>
            <person name="Land M."/>
            <person name="Lao V."/>
            <person name="Larimer F."/>
            <person name="LiPuma J.J."/>
            <person name="Mahenthiralingam E."/>
            <person name="Malfatti S.A."/>
            <person name="Marx C.J."/>
            <person name="Parnell J.J."/>
            <person name="Ramette A."/>
            <person name="Richardson P."/>
            <person name="Seeger M."/>
            <person name="Smith D."/>
            <person name="Spilker T."/>
            <person name="Sul W.J."/>
            <person name="Tsoi T.V."/>
            <person name="Ulrich L.E."/>
            <person name="Zhulin I.B."/>
            <person name="Tiedje J.M."/>
        </authorList>
    </citation>
    <scope>NUCLEOTIDE SEQUENCE [LARGE SCALE GENOMIC DNA]</scope>
    <source>
        <strain>LB400</strain>
    </source>
</reference>
<dbReference type="EMBL" id="CP000270">
    <property type="protein sequence ID" value="ABE31253.1"/>
    <property type="molecule type" value="Genomic_DNA"/>
</dbReference>
<dbReference type="RefSeq" id="WP_011488849.1">
    <property type="nucleotide sequence ID" value="NC_007951.1"/>
</dbReference>
<dbReference type="SMR" id="Q13XD6"/>
<dbReference type="STRING" id="266265.Bxe_A1702"/>
<dbReference type="KEGG" id="bxb:DR64_3867"/>
<dbReference type="KEGG" id="bxe:Bxe_A1702"/>
<dbReference type="PATRIC" id="fig|266265.5.peg.2844"/>
<dbReference type="eggNOG" id="COG0691">
    <property type="taxonomic scope" value="Bacteria"/>
</dbReference>
<dbReference type="OrthoDB" id="9805462at2"/>
<dbReference type="Proteomes" id="UP000001817">
    <property type="component" value="Chromosome 1"/>
</dbReference>
<dbReference type="GO" id="GO:0005829">
    <property type="term" value="C:cytosol"/>
    <property type="evidence" value="ECO:0007669"/>
    <property type="project" value="TreeGrafter"/>
</dbReference>
<dbReference type="GO" id="GO:0003723">
    <property type="term" value="F:RNA binding"/>
    <property type="evidence" value="ECO:0007669"/>
    <property type="project" value="UniProtKB-UniRule"/>
</dbReference>
<dbReference type="GO" id="GO:0070929">
    <property type="term" value="P:trans-translation"/>
    <property type="evidence" value="ECO:0007669"/>
    <property type="project" value="UniProtKB-UniRule"/>
</dbReference>
<dbReference type="CDD" id="cd09294">
    <property type="entry name" value="SmpB"/>
    <property type="match status" value="1"/>
</dbReference>
<dbReference type="Gene3D" id="2.40.280.10">
    <property type="match status" value="1"/>
</dbReference>
<dbReference type="HAMAP" id="MF_00023">
    <property type="entry name" value="SmpB"/>
    <property type="match status" value="1"/>
</dbReference>
<dbReference type="InterPro" id="IPR023620">
    <property type="entry name" value="SmpB"/>
</dbReference>
<dbReference type="InterPro" id="IPR000037">
    <property type="entry name" value="SsrA-bd_prot"/>
</dbReference>
<dbReference type="InterPro" id="IPR020081">
    <property type="entry name" value="SsrA-bd_prot_CS"/>
</dbReference>
<dbReference type="NCBIfam" id="NF003843">
    <property type="entry name" value="PRK05422.1"/>
    <property type="match status" value="1"/>
</dbReference>
<dbReference type="NCBIfam" id="TIGR00086">
    <property type="entry name" value="smpB"/>
    <property type="match status" value="1"/>
</dbReference>
<dbReference type="PANTHER" id="PTHR30308:SF2">
    <property type="entry name" value="SSRA-BINDING PROTEIN"/>
    <property type="match status" value="1"/>
</dbReference>
<dbReference type="PANTHER" id="PTHR30308">
    <property type="entry name" value="TMRNA-BINDING COMPONENT OF TRANS-TRANSLATION TAGGING COMPLEX"/>
    <property type="match status" value="1"/>
</dbReference>
<dbReference type="Pfam" id="PF01668">
    <property type="entry name" value="SmpB"/>
    <property type="match status" value="1"/>
</dbReference>
<dbReference type="SUPFAM" id="SSF74982">
    <property type="entry name" value="Small protein B (SmpB)"/>
    <property type="match status" value="1"/>
</dbReference>
<dbReference type="PROSITE" id="PS01317">
    <property type="entry name" value="SSRP"/>
    <property type="match status" value="1"/>
</dbReference>
<gene>
    <name evidence="1" type="primary">smpB</name>
    <name type="ordered locus">Bxeno_A2715</name>
    <name type="ORF">Bxe_A1702</name>
</gene>
<organism>
    <name type="scientific">Paraburkholderia xenovorans (strain LB400)</name>
    <dbReference type="NCBI Taxonomy" id="266265"/>
    <lineage>
        <taxon>Bacteria</taxon>
        <taxon>Pseudomonadati</taxon>
        <taxon>Pseudomonadota</taxon>
        <taxon>Betaproteobacteria</taxon>
        <taxon>Burkholderiales</taxon>
        <taxon>Burkholderiaceae</taxon>
        <taxon>Paraburkholderia</taxon>
    </lineage>
</organism>
<comment type="function">
    <text evidence="1">Required for rescue of stalled ribosomes mediated by trans-translation. Binds to transfer-messenger RNA (tmRNA), required for stable association of tmRNA with ribosomes. tmRNA and SmpB together mimic tRNA shape, replacing the anticodon stem-loop with SmpB. tmRNA is encoded by the ssrA gene; the 2 termini fold to resemble tRNA(Ala) and it encodes a 'tag peptide', a short internal open reading frame. During trans-translation Ala-aminoacylated tmRNA acts like a tRNA, entering the A-site of stalled ribosomes, displacing the stalled mRNA. The ribosome then switches to translate the ORF on the tmRNA; the nascent peptide is terminated with the 'tag peptide' encoded by the tmRNA and targeted for degradation. The ribosome is freed to recommence translation, which seems to be the essential function of trans-translation.</text>
</comment>
<comment type="subcellular location">
    <subcellularLocation>
        <location evidence="1">Cytoplasm</location>
    </subcellularLocation>
    <text evidence="1">The tmRNA-SmpB complex associates with stalled 70S ribosomes.</text>
</comment>
<comment type="similarity">
    <text evidence="1">Belongs to the SmpB family.</text>
</comment>
<protein>
    <recommendedName>
        <fullName evidence="1">SsrA-binding protein</fullName>
    </recommendedName>
    <alternativeName>
        <fullName evidence="1">Small protein B</fullName>
    </alternativeName>
</protein>
<feature type="chain" id="PRO_1000002022" description="SsrA-binding protein">
    <location>
        <begin position="1"/>
        <end position="148"/>
    </location>
</feature>
<feature type="region of interest" description="Disordered" evidence="2">
    <location>
        <begin position="119"/>
        <end position="148"/>
    </location>
</feature>
<feature type="compositionally biased region" description="Basic and acidic residues" evidence="2">
    <location>
        <begin position="126"/>
        <end position="142"/>
    </location>
</feature>
<name>SSRP_PARXL</name>
<keyword id="KW-0963">Cytoplasm</keyword>
<keyword id="KW-1185">Reference proteome</keyword>
<keyword id="KW-0694">RNA-binding</keyword>
<accession>Q13XD6</accession>
<evidence type="ECO:0000255" key="1">
    <source>
        <dbReference type="HAMAP-Rule" id="MF_00023"/>
    </source>
</evidence>
<evidence type="ECO:0000256" key="2">
    <source>
        <dbReference type="SAM" id="MobiDB-lite"/>
    </source>
</evidence>
<sequence length="148" mass="17085">MSIIDNRKAFYDYSVEERYEAGLVLEGWEVKALRAGRGQIKEGYVVIKNNELFLIGTHISPLPEASTHINPDPVRTRKLLLHSEEISKLIGKVEQRGYTLVPLNFHYKGGRVKCEIGLAKGKKQHDKRETEKKRDWEREKARLMRSPG</sequence>